<accession>Q197C3</accession>
<comment type="subcellular location">
    <subcellularLocation>
        <location evidence="3">Host membrane</location>
        <topology evidence="3">Single-pass membrane protein</topology>
    </subcellularLocation>
</comment>
<sequence>MNAATSGIQLNAQTLSQQPAMNTPLIHRSFRDDYTGLVSAGDGLYKRKLKVPSTTRCNKFKWCSIGWSIGALIIFLVYKLEKPHVQPTSNGNLSLIEPEKLVSESQLIQKILNATTPQTTTPEIPSSTEPQELVTEILNTTTPQTTTPEIPSSTEPQELVTEIPSSTEPQEEIFSIFKSPKPEEPGGINSIPQYEQESNNVEDEPPPNKPEEEEDHDNQPLEERHTVPILGDVIIRNKTIIIDGGNETIIIKP</sequence>
<organismHost>
    <name type="scientific">Aedes vexans</name>
    <name type="common">Inland floodwater mosquito</name>
    <name type="synonym">Culex vexans</name>
    <dbReference type="NCBI Taxonomy" id="7163"/>
</organismHost>
<organismHost>
    <name type="scientific">Culex territans</name>
    <dbReference type="NCBI Taxonomy" id="42431"/>
</organismHost>
<organismHost>
    <name type="scientific">Culiseta annulata</name>
    <dbReference type="NCBI Taxonomy" id="332058"/>
</organismHost>
<organismHost>
    <name type="scientific">Ochlerotatus sollicitans</name>
    <name type="common">eastern saltmarsh mosquito</name>
    <dbReference type="NCBI Taxonomy" id="310513"/>
</organismHost>
<organismHost>
    <name type="scientific">Ochlerotatus taeniorhynchus</name>
    <name type="common">Black salt marsh mosquito</name>
    <name type="synonym">Aedes taeniorhynchus</name>
    <dbReference type="NCBI Taxonomy" id="329105"/>
</organismHost>
<organismHost>
    <name type="scientific">Psorophora ferox</name>
    <dbReference type="NCBI Taxonomy" id="7183"/>
</organismHost>
<gene>
    <name type="ORF">IIV3-037L</name>
</gene>
<dbReference type="EMBL" id="DQ643392">
    <property type="protein sequence ID" value="ABF82067.1"/>
    <property type="molecule type" value="Genomic_DNA"/>
</dbReference>
<dbReference type="RefSeq" id="YP_654609.1">
    <property type="nucleotide sequence ID" value="NC_008187.1"/>
</dbReference>
<dbReference type="SMR" id="Q197C3"/>
<dbReference type="KEGG" id="vg:4156347"/>
<dbReference type="Proteomes" id="UP000001358">
    <property type="component" value="Genome"/>
</dbReference>
<dbReference type="GO" id="GO:0033644">
    <property type="term" value="C:host cell membrane"/>
    <property type="evidence" value="ECO:0007669"/>
    <property type="project" value="UniProtKB-SubCell"/>
</dbReference>
<dbReference type="GO" id="GO:0016020">
    <property type="term" value="C:membrane"/>
    <property type="evidence" value="ECO:0007669"/>
    <property type="project" value="UniProtKB-KW"/>
</dbReference>
<name>037L_IIV3</name>
<keyword id="KW-1043">Host membrane</keyword>
<keyword id="KW-0472">Membrane</keyword>
<keyword id="KW-1185">Reference proteome</keyword>
<keyword id="KW-0812">Transmembrane</keyword>
<keyword id="KW-1133">Transmembrane helix</keyword>
<feature type="chain" id="PRO_0000377950" description="Uncharacterized protein 037L">
    <location>
        <begin position="1"/>
        <end position="253"/>
    </location>
</feature>
<feature type="transmembrane region" description="Helical" evidence="1">
    <location>
        <begin position="62"/>
        <end position="78"/>
    </location>
</feature>
<feature type="region of interest" description="Disordered" evidence="2">
    <location>
        <begin position="141"/>
        <end position="225"/>
    </location>
</feature>
<feature type="compositionally biased region" description="Low complexity" evidence="2">
    <location>
        <begin position="141"/>
        <end position="158"/>
    </location>
</feature>
<feature type="compositionally biased region" description="Acidic residues" evidence="2">
    <location>
        <begin position="200"/>
        <end position="216"/>
    </location>
</feature>
<organism>
    <name type="scientific">Invertebrate iridescent virus 3</name>
    <name type="common">IIV-3</name>
    <name type="synonym">Mosquito iridescent virus</name>
    <dbReference type="NCBI Taxonomy" id="345201"/>
    <lineage>
        <taxon>Viruses</taxon>
        <taxon>Varidnaviria</taxon>
        <taxon>Bamfordvirae</taxon>
        <taxon>Nucleocytoviricota</taxon>
        <taxon>Megaviricetes</taxon>
        <taxon>Pimascovirales</taxon>
        <taxon>Iridoviridae</taxon>
        <taxon>Betairidovirinae</taxon>
        <taxon>Chloriridovirus</taxon>
    </lineage>
</organism>
<reference key="1">
    <citation type="journal article" date="2006" name="J. Virol.">
        <title>Genome of invertebrate iridescent virus type 3 (mosquito iridescent virus).</title>
        <authorList>
            <person name="Delhon G."/>
            <person name="Tulman E.R."/>
            <person name="Afonso C.L."/>
            <person name="Lu Z."/>
            <person name="Becnel J.J."/>
            <person name="Moser B.A."/>
            <person name="Kutish G.F."/>
            <person name="Rock D.L."/>
        </authorList>
    </citation>
    <scope>NUCLEOTIDE SEQUENCE [LARGE SCALE GENOMIC DNA]</scope>
</reference>
<protein>
    <recommendedName>
        <fullName>Uncharacterized protein 037L</fullName>
    </recommendedName>
</protein>
<proteinExistence type="predicted"/>
<evidence type="ECO:0000255" key="1"/>
<evidence type="ECO:0000256" key="2">
    <source>
        <dbReference type="SAM" id="MobiDB-lite"/>
    </source>
</evidence>
<evidence type="ECO:0000305" key="3"/>